<proteinExistence type="evidence at protein level"/>
<accession>P03562</accession>
<reference key="1">
    <citation type="journal article" date="1984" name="EMBO J.">
        <title>Complete nucleotide sequence of the infectious cloned DNA components of tomato golden mosaic virus: potential coding regions and regulatory sequences.</title>
        <authorList>
            <person name="Hamilton W.D.O."/>
            <person name="Stein V.E."/>
            <person name="Coutts R.H.A."/>
            <person name="Buck K.W."/>
        </authorList>
    </citation>
    <scope>NUCLEOTIDE SEQUENCE [GENOMIC DNA]</scope>
</reference>
<reference key="2">
    <citation type="journal article" date="1997" name="Virology">
        <title>Regulation of a geminivirus coat protein promoter by AL2 protein (TrAP): evidence for activation and derepression mechanisms.</title>
        <authorList>
            <person name="Sunter G."/>
            <person name="Bisaro D.M."/>
        </authorList>
    </citation>
    <scope>FUNCTION</scope>
</reference>
<reference key="3">
    <citation type="journal article" date="1999" name="Virology">
        <title>The tomato golden mosaic virus transactivator (TrAP) is a single-stranded DNA and zinc-binding phosphoprotein with an acidic activation domain.</title>
        <authorList>
            <person name="Hartitz M.D."/>
            <person name="Sunter G."/>
            <person name="Bisaro D.M."/>
        </authorList>
    </citation>
    <scope>DNA-BINDING</scope>
    <scope>TRANSACTIVATION REGION</scope>
    <scope>PHOSPHORYLATION</scope>
</reference>
<reference key="4">
    <citation type="journal article" date="2003" name="Plant Cell">
        <title>Geminivirus AL2 and L2 proteins interact with and inactivate SNF1 kinase.</title>
        <authorList>
            <person name="Hao L."/>
            <person name="Wang H."/>
            <person name="Sunter G."/>
            <person name="Bisaro D.M."/>
        </authorList>
    </citation>
    <scope>FUNCTION</scope>
    <scope>INTERACTION WITH ARABIDOPSIS THALIANA SNF1</scope>
</reference>
<reference key="5">
    <citation type="journal article" date="2003" name="Plant Cell">
        <title>Adenosine kinase is inactivated by geminivirus AL2 and L2 proteins.</title>
        <authorList>
            <person name="Wang H."/>
            <person name="Hao L."/>
            <person name="Shung C.-Y."/>
            <person name="Sunter G."/>
            <person name="Bisaro D.M."/>
        </authorList>
    </citation>
    <scope>FUNCTION</scope>
    <scope>SUBCELLULAR LOCATION</scope>
    <scope>PHOSPHORYLATION</scope>
    <scope>INTERACTION WITH ARABIDOPSIS THALIANA ADK1 AND ADK2</scope>
</reference>
<reference key="6">
    <citation type="journal article" date="2005" name="J. Virol.">
        <title>Adenosine kinase inhibition and suppression of RNA silencing by geminivirus AL2 and L2 proteins.</title>
        <authorList>
            <person name="Wang H."/>
            <person name="Buckley K.J."/>
            <person name="Yang X."/>
            <person name="Buchmann R.C."/>
            <person name="Bisaro D.M."/>
        </authorList>
    </citation>
    <scope>FUNCTION</scope>
</reference>
<reference key="7">
    <citation type="journal article" date="2007" name="J. Virol.">
        <title>Functional modulation of the geminivirus AL2 transcription factor and silencing suppressor by self-interaction.</title>
        <authorList>
            <person name="Yang X."/>
            <person name="Baliji S."/>
            <person name="Buchmann R.C."/>
            <person name="Wang H."/>
            <person name="Lindbo J.A."/>
            <person name="Sunter G."/>
            <person name="Bisaro D.M."/>
        </authorList>
    </citation>
    <scope>SUBUNIT</scope>
    <scope>SUBCELLULAR LOCATION</scope>
    <scope>INTERACTION WITH ARABIDOPSIS THALIANA ADK2</scope>
    <scope>MUTAGENESIS OF CYS-33; CYS-35; HIS-40 AND CYS-43</scope>
</reference>
<organism>
    <name type="scientific">Tomato golden mosaic virus (strain Yellow vein)</name>
    <name type="common">TGMV</name>
    <dbReference type="NCBI Taxonomy" id="223341"/>
    <lineage>
        <taxon>Viruses</taxon>
        <taxon>Monodnaviria</taxon>
        <taxon>Shotokuvirae</taxon>
        <taxon>Cressdnaviricota</taxon>
        <taxon>Repensiviricetes</taxon>
        <taxon>Geplafuvirales</taxon>
        <taxon>Geminiviridae</taxon>
        <taxon>Begomovirus</taxon>
        <taxon>Tomato golden mosaic virus</taxon>
    </lineage>
</organism>
<feature type="chain" id="PRO_0000222230" description="Transcriptional activator protein">
    <location>
        <begin position="1"/>
        <end position="129"/>
    </location>
</feature>
<feature type="zinc finger region" evidence="1">
    <location>
        <begin position="33"/>
        <end position="50"/>
    </location>
</feature>
<feature type="region of interest" description="Disordered" evidence="2">
    <location>
        <begin position="73"/>
        <end position="118"/>
    </location>
</feature>
<feature type="region of interest" description="Transactivation">
    <location>
        <begin position="115"/>
        <end position="129"/>
    </location>
</feature>
<feature type="short sequence motif" description="Nuclear localization signal" evidence="1">
    <location>
        <begin position="13"/>
        <end position="28"/>
    </location>
</feature>
<feature type="compositionally biased region" description="Polar residues" evidence="2">
    <location>
        <begin position="91"/>
        <end position="114"/>
    </location>
</feature>
<feature type="mutagenesis site" description="66% loss of transactivation." evidence="6">
    <original>C</original>
    <variation>A</variation>
    <location>
        <position position="33"/>
    </location>
</feature>
<feature type="mutagenesis site" description="95% loss of transactivation." evidence="6">
    <original>C</original>
    <variation>A</variation>
    <location>
        <position position="35"/>
    </location>
</feature>
<feature type="mutagenesis site" description="Enhances transactivation." evidence="6">
    <original>H</original>
    <variation>A</variation>
    <location>
        <position position="40"/>
    </location>
</feature>
<feature type="mutagenesis site" description="72% loss of transactivation." evidence="6">
    <original>C</original>
    <variation>A</variation>
    <location>
        <position position="43"/>
    </location>
</feature>
<protein>
    <recommendedName>
        <fullName>Transcriptional activator protein</fullName>
        <shortName>TrAP</shortName>
    </recommendedName>
    <alternativeName>
        <fullName>Protein AC2</fullName>
    </alternativeName>
    <alternativeName>
        <fullName>Protein AL2</fullName>
    </alternativeName>
</protein>
<dbReference type="EMBL" id="K02029">
    <property type="status" value="NOT_ANNOTATED_CDS"/>
    <property type="molecule type" value="Genomic_DNA"/>
</dbReference>
<dbReference type="PIR" id="A04165">
    <property type="entry name" value="QQCVL2"/>
</dbReference>
<dbReference type="DIP" id="DIP-62056N"/>
<dbReference type="IntAct" id="P03562">
    <property type="interactions" value="6"/>
</dbReference>
<dbReference type="Proteomes" id="UP000007405">
    <property type="component" value="Genome"/>
</dbReference>
<dbReference type="GO" id="GO:0030430">
    <property type="term" value="C:host cell cytoplasm"/>
    <property type="evidence" value="ECO:0007669"/>
    <property type="project" value="UniProtKB-SubCell"/>
</dbReference>
<dbReference type="GO" id="GO:0042025">
    <property type="term" value="C:host cell nucleus"/>
    <property type="evidence" value="ECO:0007669"/>
    <property type="project" value="UniProtKB-SubCell"/>
</dbReference>
<dbReference type="GO" id="GO:0019028">
    <property type="term" value="C:viral capsid"/>
    <property type="evidence" value="ECO:0007669"/>
    <property type="project" value="InterPro"/>
</dbReference>
<dbReference type="GO" id="GO:0003677">
    <property type="term" value="F:DNA binding"/>
    <property type="evidence" value="ECO:0007669"/>
    <property type="project" value="UniProtKB-KW"/>
</dbReference>
<dbReference type="GO" id="GO:0005198">
    <property type="term" value="F:structural molecule activity"/>
    <property type="evidence" value="ECO:0007669"/>
    <property type="project" value="InterPro"/>
</dbReference>
<dbReference type="GO" id="GO:0008270">
    <property type="term" value="F:zinc ion binding"/>
    <property type="evidence" value="ECO:0007669"/>
    <property type="project" value="UniProtKB-KW"/>
</dbReference>
<dbReference type="GO" id="GO:0052170">
    <property type="term" value="P:symbiont-mediated suppression of host innate immune response"/>
    <property type="evidence" value="ECO:0007669"/>
    <property type="project" value="UniProtKB-KW"/>
</dbReference>
<dbReference type="InterPro" id="IPR000942">
    <property type="entry name" value="Gemini_AL2"/>
</dbReference>
<dbReference type="Pfam" id="PF01440">
    <property type="entry name" value="Gemini_AL2"/>
    <property type="match status" value="1"/>
</dbReference>
<dbReference type="PRINTS" id="PR00230">
    <property type="entry name" value="GEMCOATAL2"/>
</dbReference>
<gene>
    <name type="ORF">AC2</name>
    <name type="ORF">AL2</name>
</gene>
<name>TRAP_TGMVY</name>
<organismHost>
    <name type="scientific">Solanum lycopersicum</name>
    <name type="common">Tomato</name>
    <name type="synonym">Lycopersicon esculentum</name>
    <dbReference type="NCBI Taxonomy" id="4081"/>
</organismHost>
<keyword id="KW-0010">Activator</keyword>
<keyword id="KW-0238">DNA-binding</keyword>
<keyword id="KW-1035">Host cytoplasm</keyword>
<keyword id="KW-1048">Host nucleus</keyword>
<keyword id="KW-0945">Host-virus interaction</keyword>
<keyword id="KW-1090">Inhibition of host innate immune response by virus</keyword>
<keyword id="KW-0479">Metal-binding</keyword>
<keyword id="KW-0597">Phosphoprotein</keyword>
<keyword id="KW-1185">Reference proteome</keyword>
<keyword id="KW-0941">Suppressor of RNA silencing</keyword>
<keyword id="KW-0899">Viral immunoevasion</keyword>
<keyword id="KW-0862">Zinc</keyword>
<keyword id="KW-0863">Zinc-finger</keyword>
<comment type="function">
    <text evidence="3 4 5 7">Strong activator of the late viral genes promoters. Enhances the expression of the capsid protein and nuclear shuttle protein. Acts as a suppressor of RNA-mediated gene silencing, also known as post-transcriptional gene silencing (PTGS), a mechanism of plant viral defense that limits the accumulation of viral RNAs. Suppresses the host RNA silencing by inhibiting adenosine kinase (ADK), a kinase involved in a general methylation pathway. Also suppresses the host basal defense by interacting with and inhibiting SNF1 kinase, a key regulator of cell metabolism implicated in innate antiviral defense. Determines pathogenicity.</text>
</comment>
<comment type="subunit">
    <text evidence="3 4 6">Monomer. Homodimer. Homooligomer. Self-interaction correlates with nuclear localization and efficient activation of transcription. Monomers suppress local silencing by interacting with and inactivating host adenosine kinase (ADK) in the cytoplasm. Interacts with and inhibits host SNF1 kinase. Binds to ssDNA.</text>
</comment>
<comment type="interaction">
    <interactant intactId="EBI-16175508">
        <id>P03562</id>
    </interactant>
    <interactant intactId="EBI-16175606">
        <id>Q96703</id>
        <label>AL2</label>
    </interactant>
    <organismsDiffer>true</organismsDiffer>
    <experiments>2</experiments>
</comment>
<comment type="interaction">
    <interactant intactId="EBI-16175508">
        <id>P03562</id>
    </interactant>
    <interactant intactId="EBI-16175525">
        <id>Q8GZB6</id>
        <label>SUVH4</label>
    </interactant>
    <organismsDiffer>true</organismsDiffer>
    <experiments>4</experiments>
</comment>
<comment type="subcellular location">
    <subcellularLocation>
        <location>Host nucleus</location>
    </subcellularLocation>
    <subcellularLocation>
        <location>Host cytoplasm</location>
    </subcellularLocation>
    <text>The phosphorylated form appears to accumulate almost exclusively in the nucleus, whereas the non-phosphorylated form is found in both nucleus and cytoplasm.</text>
</comment>
<comment type="domain">
    <text evidence="1">The zinc finger and the transactivation region are involved in PTGS suppression.</text>
</comment>
<comment type="PTM">
    <text evidence="9 10">Phosphorylated.</text>
</comment>
<comment type="similarity">
    <text evidence="8">Belongs to the geminiviridae transcriptional activator protein family.</text>
</comment>
<evidence type="ECO:0000250" key="1"/>
<evidence type="ECO:0000256" key="2">
    <source>
        <dbReference type="SAM" id="MobiDB-lite"/>
    </source>
</evidence>
<evidence type="ECO:0000269" key="3">
    <source>
    </source>
</evidence>
<evidence type="ECO:0000269" key="4">
    <source>
    </source>
</evidence>
<evidence type="ECO:0000269" key="5">
    <source>
    </source>
</evidence>
<evidence type="ECO:0000269" key="6">
    <source>
    </source>
</evidence>
<evidence type="ECO:0000269" key="7">
    <source>
    </source>
</evidence>
<evidence type="ECO:0000305" key="8"/>
<evidence type="ECO:0000305" key="9">
    <source>
    </source>
</evidence>
<evidence type="ECO:0000305" key="10">
    <source>
    </source>
</evidence>
<sequence length="129" mass="14888">MRNSSSSTPPSIKAQHRAAKRRAIRRRRIDLNCGCSIYIHIDCRNNGFTHRGTYHCASSREWRLYLGDNKSPLFQDNQRRGSPLHQHQDIPLTNQVQPQPEESIGSPQGISQLPSMDDIDDSFWENLFK</sequence>